<comment type="catalytic activity">
    <reaction evidence="2">
        <text>orotidine 5'-phosphate + H(+) = UMP + CO2</text>
        <dbReference type="Rhea" id="RHEA:11596"/>
        <dbReference type="ChEBI" id="CHEBI:15378"/>
        <dbReference type="ChEBI" id="CHEBI:16526"/>
        <dbReference type="ChEBI" id="CHEBI:57538"/>
        <dbReference type="ChEBI" id="CHEBI:57865"/>
        <dbReference type="EC" id="4.1.1.23"/>
    </reaction>
</comment>
<comment type="pathway">
    <text>Pyrimidine metabolism; UMP biosynthesis via de novo pathway; UMP from orotate: step 2/2.</text>
</comment>
<comment type="similarity">
    <text evidence="3">Belongs to the OMP decarboxylase family.</text>
</comment>
<protein>
    <recommendedName>
        <fullName>Orotidine 5'-phosphate decarboxylase</fullName>
        <ecNumber>4.1.1.23</ecNumber>
    </recommendedName>
    <alternativeName>
        <fullName>OMP decarboxylase</fullName>
        <shortName>OMPDCase</shortName>
        <shortName>OMPdecase</shortName>
    </alternativeName>
    <alternativeName>
        <fullName>Uridine 5'-monophosphate synthase</fullName>
        <shortName>UMP synthase</shortName>
    </alternativeName>
</protein>
<name>PYRF_PASFU</name>
<keyword id="KW-0210">Decarboxylase</keyword>
<keyword id="KW-0456">Lyase</keyword>
<keyword id="KW-0665">Pyrimidine biosynthesis</keyword>
<accession>Q9HFV8</accession>
<proteinExistence type="inferred from homology"/>
<gene>
    <name type="primary">PYR1</name>
</gene>
<evidence type="ECO:0000250" key="1"/>
<evidence type="ECO:0000255" key="2">
    <source>
        <dbReference type="PROSITE-ProRule" id="PRU10110"/>
    </source>
</evidence>
<evidence type="ECO:0000305" key="3"/>
<dbReference type="EC" id="4.1.1.23"/>
<dbReference type="EMBL" id="AF288696">
    <property type="protein sequence ID" value="AAG10516.1"/>
    <property type="molecule type" value="Genomic_DNA"/>
</dbReference>
<dbReference type="SMR" id="Q9HFV8"/>
<dbReference type="UniPathway" id="UPA00070">
    <property type="reaction ID" value="UER00120"/>
</dbReference>
<dbReference type="GO" id="GO:0005829">
    <property type="term" value="C:cytosol"/>
    <property type="evidence" value="ECO:0007669"/>
    <property type="project" value="TreeGrafter"/>
</dbReference>
<dbReference type="GO" id="GO:0004590">
    <property type="term" value="F:orotidine-5'-phosphate decarboxylase activity"/>
    <property type="evidence" value="ECO:0007669"/>
    <property type="project" value="UniProtKB-EC"/>
</dbReference>
<dbReference type="GO" id="GO:0006207">
    <property type="term" value="P:'de novo' pyrimidine nucleobase biosynthetic process"/>
    <property type="evidence" value="ECO:0007669"/>
    <property type="project" value="InterPro"/>
</dbReference>
<dbReference type="GO" id="GO:0044205">
    <property type="term" value="P:'de novo' UMP biosynthetic process"/>
    <property type="evidence" value="ECO:0007669"/>
    <property type="project" value="UniProtKB-UniPathway"/>
</dbReference>
<dbReference type="CDD" id="cd04725">
    <property type="entry name" value="OMP_decarboxylase_like"/>
    <property type="match status" value="1"/>
</dbReference>
<dbReference type="FunFam" id="3.20.20.70:FF:000114">
    <property type="entry name" value="Decarboxylase,orotidine phosphate"/>
    <property type="match status" value="1"/>
</dbReference>
<dbReference type="Gene3D" id="3.20.20.70">
    <property type="entry name" value="Aldolase class I"/>
    <property type="match status" value="1"/>
</dbReference>
<dbReference type="InterPro" id="IPR013785">
    <property type="entry name" value="Aldolase_TIM"/>
</dbReference>
<dbReference type="InterPro" id="IPR014732">
    <property type="entry name" value="OMPdecase"/>
</dbReference>
<dbReference type="InterPro" id="IPR018089">
    <property type="entry name" value="OMPdecase_AS"/>
</dbReference>
<dbReference type="InterPro" id="IPR001754">
    <property type="entry name" value="OMPdeCOase_dom"/>
</dbReference>
<dbReference type="InterPro" id="IPR011060">
    <property type="entry name" value="RibuloseP-bd_barrel"/>
</dbReference>
<dbReference type="NCBIfam" id="TIGR01740">
    <property type="entry name" value="pyrF"/>
    <property type="match status" value="1"/>
</dbReference>
<dbReference type="PANTHER" id="PTHR32119">
    <property type="entry name" value="OROTIDINE 5'-PHOSPHATE DECARBOXYLASE"/>
    <property type="match status" value="1"/>
</dbReference>
<dbReference type="PANTHER" id="PTHR32119:SF2">
    <property type="entry name" value="OROTIDINE 5'-PHOSPHATE DECARBOXYLASE"/>
    <property type="match status" value="1"/>
</dbReference>
<dbReference type="Pfam" id="PF00215">
    <property type="entry name" value="OMPdecase"/>
    <property type="match status" value="1"/>
</dbReference>
<dbReference type="SMART" id="SM00934">
    <property type="entry name" value="OMPdecase"/>
    <property type="match status" value="1"/>
</dbReference>
<dbReference type="SUPFAM" id="SSF51366">
    <property type="entry name" value="Ribulose-phoshate binding barrel"/>
    <property type="match status" value="1"/>
</dbReference>
<dbReference type="PROSITE" id="PS00156">
    <property type="entry name" value="OMPDECASE"/>
    <property type="match status" value="1"/>
</dbReference>
<organism>
    <name type="scientific">Passalora fulva</name>
    <name type="common">Tomato leaf mold</name>
    <name type="synonym">Cladosporium fulvum</name>
    <dbReference type="NCBI Taxonomy" id="5499"/>
    <lineage>
        <taxon>Eukaryota</taxon>
        <taxon>Fungi</taxon>
        <taxon>Dikarya</taxon>
        <taxon>Ascomycota</taxon>
        <taxon>Pezizomycotina</taxon>
        <taxon>Dothideomycetes</taxon>
        <taxon>Dothideomycetidae</taxon>
        <taxon>Mycosphaerellales</taxon>
        <taxon>Mycosphaerellaceae</taxon>
        <taxon>Fulvia</taxon>
    </lineage>
</organism>
<sequence length="278" mass="29957">MSSKSQLPFSTRASNHPNPLARKLFEVAEAKKSNVTVSADVTTTKELLDLADRLGPYIAVIKTHIDILSDFGPETINGLNALAEKHNFLIFEDRKFIDIGNTVQKQYHGGALKISEWAHIINCAVLPAEGIVQALAETAQAEDFPHGSERGLLILAEMTSKGSLATGEYTSASVDYARKYPSFVLGFVSTRALTEVSSTVTAADNEDFVVFTTGVNLSSKGDKLGQQYQTPQSAIGRGADFIIAGRGIYTAPDPVEAAKQYQQQGWEAYLARVGGASQ</sequence>
<feature type="chain" id="PRO_0000134656" description="Orotidine 5'-phosphate decarboxylase">
    <location>
        <begin position="1"/>
        <end position="278"/>
    </location>
</feature>
<feature type="active site" description="Proton donor" evidence="2">
    <location>
        <position position="95"/>
    </location>
</feature>
<feature type="binding site" evidence="1">
    <location>
        <position position="40"/>
    </location>
    <ligand>
        <name>substrate</name>
    </ligand>
</feature>
<feature type="binding site" evidence="1">
    <location>
        <begin position="62"/>
        <end position="64"/>
    </location>
    <ligand>
        <name>substrate</name>
    </ligand>
</feature>
<feature type="binding site" evidence="1">
    <location>
        <begin position="93"/>
        <end position="102"/>
    </location>
    <ligand>
        <name>substrate</name>
    </ligand>
</feature>
<feature type="binding site" evidence="1">
    <location>
        <position position="228"/>
    </location>
    <ligand>
        <name>substrate</name>
    </ligand>
</feature>
<feature type="binding site" evidence="1">
    <location>
        <position position="246"/>
    </location>
    <ligand>
        <name>substrate</name>
    </ligand>
</feature>
<reference key="1">
    <citation type="submission" date="2000-07" db="EMBL/GenBank/DDBJ databases">
        <title>The pyr1 gene of the tomato pathogen Cladosporium fulvum.</title>
        <authorList>
            <person name="Snoeijers S.S."/>
        </authorList>
    </citation>
    <scope>NUCLEOTIDE SEQUENCE [GENOMIC DNA]</scope>
</reference>